<protein>
    <recommendedName>
        <fullName>Vacuolar fusion protein CCZ1 homolog</fullName>
    </recommendedName>
</protein>
<reference key="1">
    <citation type="journal article" date="2005" name="Science">
        <title>The transcriptional landscape of the mammalian genome.</title>
        <authorList>
            <person name="Carninci P."/>
            <person name="Kasukawa T."/>
            <person name="Katayama S."/>
            <person name="Gough J."/>
            <person name="Frith M.C."/>
            <person name="Maeda N."/>
            <person name="Oyama R."/>
            <person name="Ravasi T."/>
            <person name="Lenhard B."/>
            <person name="Wells C."/>
            <person name="Kodzius R."/>
            <person name="Shimokawa K."/>
            <person name="Bajic V.B."/>
            <person name="Brenner S.E."/>
            <person name="Batalov S."/>
            <person name="Forrest A.R."/>
            <person name="Zavolan M."/>
            <person name="Davis M.J."/>
            <person name="Wilming L.G."/>
            <person name="Aidinis V."/>
            <person name="Allen J.E."/>
            <person name="Ambesi-Impiombato A."/>
            <person name="Apweiler R."/>
            <person name="Aturaliya R.N."/>
            <person name="Bailey T.L."/>
            <person name="Bansal M."/>
            <person name="Baxter L."/>
            <person name="Beisel K.W."/>
            <person name="Bersano T."/>
            <person name="Bono H."/>
            <person name="Chalk A.M."/>
            <person name="Chiu K.P."/>
            <person name="Choudhary V."/>
            <person name="Christoffels A."/>
            <person name="Clutterbuck D.R."/>
            <person name="Crowe M.L."/>
            <person name="Dalla E."/>
            <person name="Dalrymple B.P."/>
            <person name="de Bono B."/>
            <person name="Della Gatta G."/>
            <person name="di Bernardo D."/>
            <person name="Down T."/>
            <person name="Engstrom P."/>
            <person name="Fagiolini M."/>
            <person name="Faulkner G."/>
            <person name="Fletcher C.F."/>
            <person name="Fukushima T."/>
            <person name="Furuno M."/>
            <person name="Futaki S."/>
            <person name="Gariboldi M."/>
            <person name="Georgii-Hemming P."/>
            <person name="Gingeras T.R."/>
            <person name="Gojobori T."/>
            <person name="Green R.E."/>
            <person name="Gustincich S."/>
            <person name="Harbers M."/>
            <person name="Hayashi Y."/>
            <person name="Hensch T.K."/>
            <person name="Hirokawa N."/>
            <person name="Hill D."/>
            <person name="Huminiecki L."/>
            <person name="Iacono M."/>
            <person name="Ikeo K."/>
            <person name="Iwama A."/>
            <person name="Ishikawa T."/>
            <person name="Jakt M."/>
            <person name="Kanapin A."/>
            <person name="Katoh M."/>
            <person name="Kawasawa Y."/>
            <person name="Kelso J."/>
            <person name="Kitamura H."/>
            <person name="Kitano H."/>
            <person name="Kollias G."/>
            <person name="Krishnan S.P."/>
            <person name="Kruger A."/>
            <person name="Kummerfeld S.K."/>
            <person name="Kurochkin I.V."/>
            <person name="Lareau L.F."/>
            <person name="Lazarevic D."/>
            <person name="Lipovich L."/>
            <person name="Liu J."/>
            <person name="Liuni S."/>
            <person name="McWilliam S."/>
            <person name="Madan Babu M."/>
            <person name="Madera M."/>
            <person name="Marchionni L."/>
            <person name="Matsuda H."/>
            <person name="Matsuzawa S."/>
            <person name="Miki H."/>
            <person name="Mignone F."/>
            <person name="Miyake S."/>
            <person name="Morris K."/>
            <person name="Mottagui-Tabar S."/>
            <person name="Mulder N."/>
            <person name="Nakano N."/>
            <person name="Nakauchi H."/>
            <person name="Ng P."/>
            <person name="Nilsson R."/>
            <person name="Nishiguchi S."/>
            <person name="Nishikawa S."/>
            <person name="Nori F."/>
            <person name="Ohara O."/>
            <person name="Okazaki Y."/>
            <person name="Orlando V."/>
            <person name="Pang K.C."/>
            <person name="Pavan W.J."/>
            <person name="Pavesi G."/>
            <person name="Pesole G."/>
            <person name="Petrovsky N."/>
            <person name="Piazza S."/>
            <person name="Reed J."/>
            <person name="Reid J.F."/>
            <person name="Ring B.Z."/>
            <person name="Ringwald M."/>
            <person name="Rost B."/>
            <person name="Ruan Y."/>
            <person name="Salzberg S.L."/>
            <person name="Sandelin A."/>
            <person name="Schneider C."/>
            <person name="Schoenbach C."/>
            <person name="Sekiguchi K."/>
            <person name="Semple C.A."/>
            <person name="Seno S."/>
            <person name="Sessa L."/>
            <person name="Sheng Y."/>
            <person name="Shibata Y."/>
            <person name="Shimada H."/>
            <person name="Shimada K."/>
            <person name="Silva D."/>
            <person name="Sinclair B."/>
            <person name="Sperling S."/>
            <person name="Stupka E."/>
            <person name="Sugiura K."/>
            <person name="Sultana R."/>
            <person name="Takenaka Y."/>
            <person name="Taki K."/>
            <person name="Tammoja K."/>
            <person name="Tan S.L."/>
            <person name="Tang S."/>
            <person name="Taylor M.S."/>
            <person name="Tegner J."/>
            <person name="Teichmann S.A."/>
            <person name="Ueda H.R."/>
            <person name="van Nimwegen E."/>
            <person name="Verardo R."/>
            <person name="Wei C.L."/>
            <person name="Yagi K."/>
            <person name="Yamanishi H."/>
            <person name="Zabarovsky E."/>
            <person name="Zhu S."/>
            <person name="Zimmer A."/>
            <person name="Hide W."/>
            <person name="Bult C."/>
            <person name="Grimmond S.M."/>
            <person name="Teasdale R.D."/>
            <person name="Liu E.T."/>
            <person name="Brusic V."/>
            <person name="Quackenbush J."/>
            <person name="Wahlestedt C."/>
            <person name="Mattick J.S."/>
            <person name="Hume D.A."/>
            <person name="Kai C."/>
            <person name="Sasaki D."/>
            <person name="Tomaru Y."/>
            <person name="Fukuda S."/>
            <person name="Kanamori-Katayama M."/>
            <person name="Suzuki M."/>
            <person name="Aoki J."/>
            <person name="Arakawa T."/>
            <person name="Iida J."/>
            <person name="Imamura K."/>
            <person name="Itoh M."/>
            <person name="Kato T."/>
            <person name="Kawaji H."/>
            <person name="Kawagashira N."/>
            <person name="Kawashima T."/>
            <person name="Kojima M."/>
            <person name="Kondo S."/>
            <person name="Konno H."/>
            <person name="Nakano K."/>
            <person name="Ninomiya N."/>
            <person name="Nishio T."/>
            <person name="Okada M."/>
            <person name="Plessy C."/>
            <person name="Shibata K."/>
            <person name="Shiraki T."/>
            <person name="Suzuki S."/>
            <person name="Tagami M."/>
            <person name="Waki K."/>
            <person name="Watahiki A."/>
            <person name="Okamura-Oho Y."/>
            <person name="Suzuki H."/>
            <person name="Kawai J."/>
            <person name="Hayashizaki Y."/>
        </authorList>
    </citation>
    <scope>NUCLEOTIDE SEQUENCE [LARGE SCALE MRNA]</scope>
    <source>
        <strain>C57BL/6J</strain>
        <tissue>Bone marrow</tissue>
        <tissue>Testis</tissue>
    </source>
</reference>
<reference key="2">
    <citation type="journal article" date="2004" name="Genome Res.">
        <title>The status, quality, and expansion of the NIH full-length cDNA project: the Mammalian Gene Collection (MGC).</title>
        <authorList>
            <consortium name="The MGC Project Team"/>
        </authorList>
    </citation>
    <scope>NUCLEOTIDE SEQUENCE [LARGE SCALE MRNA]</scope>
    <source>
        <tissue>Olfactory epithelium</tissue>
    </source>
</reference>
<reference key="3">
    <citation type="journal article" date="2009" name="Immunity">
        <title>The phagosomal proteome in interferon-gamma-activated macrophages.</title>
        <authorList>
            <person name="Trost M."/>
            <person name="English L."/>
            <person name="Lemieux S."/>
            <person name="Courcelles M."/>
            <person name="Desjardins M."/>
            <person name="Thibault P."/>
        </authorList>
    </citation>
    <scope>PHOSPHORYLATION [LARGE SCALE ANALYSIS] AT SER-264</scope>
    <scope>IDENTIFICATION BY MASS SPECTROMETRY [LARGE SCALE ANALYSIS]</scope>
</reference>
<reference key="4">
    <citation type="journal article" date="2010" name="Cell">
        <title>A tissue-specific atlas of mouse protein phosphorylation and expression.</title>
        <authorList>
            <person name="Huttlin E.L."/>
            <person name="Jedrychowski M.P."/>
            <person name="Elias J.E."/>
            <person name="Goswami T."/>
            <person name="Rad R."/>
            <person name="Beausoleil S.A."/>
            <person name="Villen J."/>
            <person name="Haas W."/>
            <person name="Sowa M.E."/>
            <person name="Gygi S.P."/>
        </authorList>
    </citation>
    <scope>PHOSPHORYLATION [LARGE SCALE ANALYSIS] AT SER-264</scope>
    <scope>IDENTIFICATION BY MASS SPECTROMETRY [LARGE SCALE ANALYSIS]</scope>
    <source>
        <tissue>Brain</tissue>
        <tissue>Brown adipose tissue</tissue>
        <tissue>Lung</tissue>
        <tissue>Pancreas</tissue>
        <tissue>Spleen</tissue>
        <tissue>Testis</tissue>
    </source>
</reference>
<sequence length="480" mass="55505">MAAAAAGPGAWAAQEKQFPPALLSFFIYNPRFGPREGEEENKILFYHPNEVEKNEKIRNVGLCEAIVQFTRTFSPSKPAKSLHTQKNRQFFNEPEENFWMVMVVRNPIIEKQSKDGKAVVEYQEEELLDKVYSSVLQQCYSMYKLFNGTFLKAMEDGGVKLLKERLEKFFHRYLQTLHLQSCDLLDIFGGISFFPLDKMTYLKIQSFINRMEESLSVVKYTAFLYNDQLIWSGLEQDDMRILYKYLTTSLFPRHIEPELAGRDSPVRAEMPGNLQHYGRFLTGPLNLNDPEAKCRFPKIFVNTDDTYEELHLIVYKAMSAAVCFMIDASTPLTLDFCRRLDSIVGPQLTVLASDICEQFNINKRISGSEKEPQFKFIYFNHMNLAEKSTIHMRKTPSVSLTSVHPDLMKILGDINSDFTRADEDEEIIVKAMSDYWVVGKKSDQRELYVILSQKNANLIEVNEEVKKLCATQFNNIFFLD</sequence>
<name>CCZ1_MOUSE</name>
<evidence type="ECO:0000250" key="1"/>
<evidence type="ECO:0000250" key="2">
    <source>
        <dbReference type="UniProtKB" id="P86791"/>
    </source>
</evidence>
<evidence type="ECO:0000305" key="3"/>
<evidence type="ECO:0007744" key="4">
    <source>
    </source>
</evidence>
<evidence type="ECO:0007744" key="5">
    <source>
    </source>
</evidence>
<dbReference type="EMBL" id="AK090008">
    <property type="protein sequence ID" value="BAC41041.1"/>
    <property type="molecule type" value="mRNA"/>
</dbReference>
<dbReference type="EMBL" id="AK150793">
    <property type="protein sequence ID" value="BAE29856.1"/>
    <property type="molecule type" value="mRNA"/>
</dbReference>
<dbReference type="EMBL" id="AK152328">
    <property type="protein sequence ID" value="BAE31127.1"/>
    <property type="molecule type" value="mRNA"/>
</dbReference>
<dbReference type="EMBL" id="AK152576">
    <property type="protein sequence ID" value="BAE31327.1"/>
    <property type="molecule type" value="mRNA"/>
</dbReference>
<dbReference type="EMBL" id="AK153160">
    <property type="protein sequence ID" value="BAE31770.1"/>
    <property type="molecule type" value="mRNA"/>
</dbReference>
<dbReference type="EMBL" id="BC048077">
    <property type="protein sequence ID" value="AAH48077.1"/>
    <property type="molecule type" value="mRNA"/>
</dbReference>
<dbReference type="CCDS" id="CCDS19846.1"/>
<dbReference type="RefSeq" id="NP_808350.1">
    <property type="nucleotide sequence ID" value="NM_177682.4"/>
</dbReference>
<dbReference type="SMR" id="Q8C1Y8"/>
<dbReference type="BioGRID" id="231188">
    <property type="interactions" value="8"/>
</dbReference>
<dbReference type="FunCoup" id="Q8C1Y8">
    <property type="interactions" value="3303"/>
</dbReference>
<dbReference type="IntAct" id="Q8C1Y8">
    <property type="interactions" value="2"/>
</dbReference>
<dbReference type="MINT" id="Q8C1Y8"/>
<dbReference type="STRING" id="10090.ENSMUSP00000031621"/>
<dbReference type="iPTMnet" id="Q8C1Y8"/>
<dbReference type="PhosphoSitePlus" id="Q8C1Y8"/>
<dbReference type="SwissPalm" id="Q8C1Y8"/>
<dbReference type="jPOST" id="Q8C1Y8"/>
<dbReference type="PaxDb" id="10090-ENSMUSP00000031621"/>
<dbReference type="PeptideAtlas" id="Q8C1Y8"/>
<dbReference type="ProteomicsDB" id="281430"/>
<dbReference type="Pumba" id="Q8C1Y8"/>
<dbReference type="DNASU" id="231874"/>
<dbReference type="Ensembl" id="ENSMUST00000031621.11">
    <property type="protein sequence ID" value="ENSMUSP00000031621.10"/>
    <property type="gene ID" value="ENSMUSG00000029617.11"/>
</dbReference>
<dbReference type="GeneID" id="231874"/>
<dbReference type="KEGG" id="mmu:231874"/>
<dbReference type="UCSC" id="uc009ale.1">
    <property type="organism name" value="mouse"/>
</dbReference>
<dbReference type="AGR" id="MGI:2141070"/>
<dbReference type="CTD" id="51622"/>
<dbReference type="MGI" id="MGI:2141070">
    <property type="gene designation" value="Ccz1"/>
</dbReference>
<dbReference type="VEuPathDB" id="HostDB:ENSMUSG00000029617"/>
<dbReference type="eggNOG" id="KOG2622">
    <property type="taxonomic scope" value="Eukaryota"/>
</dbReference>
<dbReference type="GeneTree" id="ENSGT00390000004713"/>
<dbReference type="HOGENOM" id="CLU_037828_2_0_1"/>
<dbReference type="InParanoid" id="Q8C1Y8"/>
<dbReference type="OMA" id="DCQALHT"/>
<dbReference type="OrthoDB" id="240546at2759"/>
<dbReference type="PhylomeDB" id="Q8C1Y8"/>
<dbReference type="TreeFam" id="TF314962"/>
<dbReference type="Reactome" id="R-MMU-8876198">
    <property type="pathway name" value="RAB GEFs exchange GTP for GDP on RABs"/>
</dbReference>
<dbReference type="BioGRID-ORCS" id="231874">
    <property type="hits" value="10 hits in 78 CRISPR screens"/>
</dbReference>
<dbReference type="ChiTaRS" id="Ccz1">
    <property type="organism name" value="mouse"/>
</dbReference>
<dbReference type="PRO" id="PR:Q8C1Y8"/>
<dbReference type="Proteomes" id="UP000000589">
    <property type="component" value="Chromosome 5"/>
</dbReference>
<dbReference type="RNAct" id="Q8C1Y8">
    <property type="molecule type" value="protein"/>
</dbReference>
<dbReference type="Bgee" id="ENSMUSG00000029617">
    <property type="expression patterns" value="Expressed in medial ganglionic eminence and 275 other cell types or tissues"/>
</dbReference>
<dbReference type="GO" id="GO:0005765">
    <property type="term" value="C:lysosomal membrane"/>
    <property type="evidence" value="ECO:0007669"/>
    <property type="project" value="UniProtKB-SubCell"/>
</dbReference>
<dbReference type="GO" id="GO:0035658">
    <property type="term" value="C:Mon1-Ccz1 complex"/>
    <property type="evidence" value="ECO:0000250"/>
    <property type="project" value="UniProtKB"/>
</dbReference>
<dbReference type="GO" id="GO:0005085">
    <property type="term" value="F:guanyl-nucleotide exchange factor activity"/>
    <property type="evidence" value="ECO:0000250"/>
    <property type="project" value="UniProtKB"/>
</dbReference>
<dbReference type="GO" id="GO:0016192">
    <property type="term" value="P:vesicle-mediated transport"/>
    <property type="evidence" value="ECO:0007669"/>
    <property type="project" value="InterPro"/>
</dbReference>
<dbReference type="InterPro" id="IPR013176">
    <property type="entry name" value="Ccz1"/>
</dbReference>
<dbReference type="InterPro" id="IPR043987">
    <property type="entry name" value="CCZ1/INTU/HSP4_longin_1"/>
</dbReference>
<dbReference type="InterPro" id="IPR043989">
    <property type="entry name" value="CCZ1/INTU/HSP4_longin_3"/>
</dbReference>
<dbReference type="InterPro" id="IPR043988">
    <property type="entry name" value="CCZ1/INTU_longin_2"/>
</dbReference>
<dbReference type="PANTHER" id="PTHR13056">
    <property type="entry name" value="VACUOLAR FUSION PROTEIN CCZ1 HOMOLOG-RELATED"/>
    <property type="match status" value="1"/>
</dbReference>
<dbReference type="PANTHER" id="PTHR13056:SF0">
    <property type="entry name" value="VACUOLAR FUSION PROTEIN CCZ1 HOMOLOG-RELATED"/>
    <property type="match status" value="1"/>
</dbReference>
<dbReference type="Pfam" id="PF19031">
    <property type="entry name" value="Intu_longin_1"/>
    <property type="match status" value="1"/>
</dbReference>
<dbReference type="Pfam" id="PF19032">
    <property type="entry name" value="Intu_longin_2"/>
    <property type="match status" value="1"/>
</dbReference>
<dbReference type="Pfam" id="PF19033">
    <property type="entry name" value="Intu_longin_3"/>
    <property type="match status" value="1"/>
</dbReference>
<comment type="function">
    <text evidence="2">Acts in concert with MON1A, as a guanine exchange factor (GEF) for RAB7, promotes the exchange of GDP to GTP, converting it from an inactive GDP-bound form into an active GTP-bound form.</text>
</comment>
<comment type="subunit">
    <text evidence="2">Interacts with MON1A. Found in a complex with RMC1, CCZ1 MON1A and MON1B.</text>
</comment>
<comment type="interaction">
    <interactant intactId="EBI-48419629">
        <id>Q8C1Y8</id>
    </interactant>
    <interactant intactId="EBI-2365563">
        <id>Q8VCQ3</id>
        <label>Nrbf2</label>
    </interactant>
    <organismsDiffer>false</organismsDiffer>
    <experiments>3</experiments>
</comment>
<comment type="subcellular location">
    <subcellularLocation>
        <location evidence="1">Lysosome membrane</location>
    </subcellularLocation>
</comment>
<comment type="similarity">
    <text evidence="3">Belongs to the CCZ1 family.</text>
</comment>
<keyword id="KW-0007">Acetylation</keyword>
<keyword id="KW-0344">Guanine-nucleotide releasing factor</keyword>
<keyword id="KW-0458">Lysosome</keyword>
<keyword id="KW-0472">Membrane</keyword>
<keyword id="KW-0597">Phosphoprotein</keyword>
<keyword id="KW-1185">Reference proteome</keyword>
<proteinExistence type="evidence at protein level"/>
<accession>Q8C1Y8</accession>
<accession>Q3U891</accession>
<gene>
    <name type="primary">Ccz1</name>
</gene>
<feature type="initiator methionine" description="Removed" evidence="2">
    <location>
        <position position="1"/>
    </location>
</feature>
<feature type="chain" id="PRO_0000089585" description="Vacuolar fusion protein CCZ1 homolog">
    <location>
        <begin position="2"/>
        <end position="480"/>
    </location>
</feature>
<feature type="modified residue" description="N-acetylalanine" evidence="2">
    <location>
        <position position="2"/>
    </location>
</feature>
<feature type="modified residue" description="Phosphoserine" evidence="2">
    <location>
        <position position="74"/>
    </location>
</feature>
<feature type="modified residue" description="Phosphoserine" evidence="4 5">
    <location>
        <position position="264"/>
    </location>
</feature>
<organism>
    <name type="scientific">Mus musculus</name>
    <name type="common">Mouse</name>
    <dbReference type="NCBI Taxonomy" id="10090"/>
    <lineage>
        <taxon>Eukaryota</taxon>
        <taxon>Metazoa</taxon>
        <taxon>Chordata</taxon>
        <taxon>Craniata</taxon>
        <taxon>Vertebrata</taxon>
        <taxon>Euteleostomi</taxon>
        <taxon>Mammalia</taxon>
        <taxon>Eutheria</taxon>
        <taxon>Euarchontoglires</taxon>
        <taxon>Glires</taxon>
        <taxon>Rodentia</taxon>
        <taxon>Myomorpha</taxon>
        <taxon>Muroidea</taxon>
        <taxon>Muridae</taxon>
        <taxon>Murinae</taxon>
        <taxon>Mus</taxon>
        <taxon>Mus</taxon>
    </lineage>
</organism>